<keyword id="KW-0067">ATP-binding</keyword>
<keyword id="KW-0963">Cytoplasm</keyword>
<keyword id="KW-0275">Fatty acid biosynthesis</keyword>
<keyword id="KW-0276">Fatty acid metabolism</keyword>
<keyword id="KW-0444">Lipid biosynthesis</keyword>
<keyword id="KW-0443">Lipid metabolism</keyword>
<keyword id="KW-0479">Metal-binding</keyword>
<keyword id="KW-0547">Nucleotide-binding</keyword>
<keyword id="KW-0808">Transferase</keyword>
<keyword id="KW-0862">Zinc</keyword>
<keyword id="KW-0863">Zinc-finger</keyword>
<accession>A5ITM4</accession>
<comment type="function">
    <text evidence="1">Component of the acetyl coenzyme A carboxylase (ACC) complex. Biotin carboxylase (BC) catalyzes the carboxylation of biotin on its carrier protein (BCCP) and then the CO(2) group is transferred by the transcarboxylase to acetyl-CoA to form malonyl-CoA.</text>
</comment>
<comment type="catalytic activity">
    <reaction evidence="1">
        <text>N(6)-carboxybiotinyl-L-lysyl-[protein] + acetyl-CoA = N(6)-biotinyl-L-lysyl-[protein] + malonyl-CoA</text>
        <dbReference type="Rhea" id="RHEA:54728"/>
        <dbReference type="Rhea" id="RHEA-COMP:10505"/>
        <dbReference type="Rhea" id="RHEA-COMP:10506"/>
        <dbReference type="ChEBI" id="CHEBI:57288"/>
        <dbReference type="ChEBI" id="CHEBI:57384"/>
        <dbReference type="ChEBI" id="CHEBI:83144"/>
        <dbReference type="ChEBI" id="CHEBI:83145"/>
        <dbReference type="EC" id="2.1.3.15"/>
    </reaction>
</comment>
<comment type="cofactor">
    <cofactor evidence="1">
        <name>Zn(2+)</name>
        <dbReference type="ChEBI" id="CHEBI:29105"/>
    </cofactor>
    <text evidence="1">Binds 1 zinc ion per subunit.</text>
</comment>
<comment type="pathway">
    <text evidence="1">Lipid metabolism; malonyl-CoA biosynthesis; malonyl-CoA from acetyl-CoA: step 1/1.</text>
</comment>
<comment type="subunit">
    <text evidence="1">Acetyl-CoA carboxylase is a heterohexamer composed of biotin carboxyl carrier protein (AccB), biotin carboxylase (AccC) and two subunits each of ACCase subunit alpha (AccA) and ACCase subunit beta (AccD).</text>
</comment>
<comment type="subcellular location">
    <subcellularLocation>
        <location evidence="1">Cytoplasm</location>
    </subcellularLocation>
</comment>
<comment type="similarity">
    <text evidence="1">Belongs to the AccD/PCCB family.</text>
</comment>
<protein>
    <recommendedName>
        <fullName evidence="1">Acetyl-coenzyme A carboxylase carboxyl transferase subunit beta</fullName>
        <shortName evidence="1">ACCase subunit beta</shortName>
        <shortName evidence="1">Acetyl-CoA carboxylase carboxyltransferase subunit beta</shortName>
        <ecNumber evidence="1">2.1.3.15</ecNumber>
    </recommendedName>
</protein>
<sequence>MFKDFFNRTKKKKYLTVQDSKNNDVPAGIMTKCPKCKKIMYTKELAENLNVCFNCDHHIALTAYKRIEAISDEGSFTEFDKGMTSANPLDFPSYLEKIEKDQQKTGLKEAVVTGTAQLDGMKFGVAVMDSRFRMGSMGSVIGEKICRIIDYCTENRLPFILFSASGGARMQEGIISLMQMGKTSVSLKRHSDAGLLYISYLTHPTTGGVSASFASVGDINLSEPKALIGFAGRRVIEQTINEKLPDDFQTAEFLLEHGQLDKVVHRNDMRQTLSEILKIHQEVTK</sequence>
<name>ACCD_STAA9</name>
<proteinExistence type="inferred from homology"/>
<dbReference type="EC" id="2.1.3.15" evidence="1"/>
<dbReference type="EMBL" id="CP000703">
    <property type="protein sequence ID" value="ABQ49547.1"/>
    <property type="molecule type" value="Genomic_DNA"/>
</dbReference>
<dbReference type="RefSeq" id="WP_000471571.1">
    <property type="nucleotide sequence ID" value="NC_009487.1"/>
</dbReference>
<dbReference type="SMR" id="A5ITM4"/>
<dbReference type="KEGG" id="saj:SaurJH9_1757"/>
<dbReference type="HOGENOM" id="CLU_015486_1_0_9"/>
<dbReference type="UniPathway" id="UPA00655">
    <property type="reaction ID" value="UER00711"/>
</dbReference>
<dbReference type="GO" id="GO:0009317">
    <property type="term" value="C:acetyl-CoA carboxylase complex"/>
    <property type="evidence" value="ECO:0007669"/>
    <property type="project" value="InterPro"/>
</dbReference>
<dbReference type="GO" id="GO:0003989">
    <property type="term" value="F:acetyl-CoA carboxylase activity"/>
    <property type="evidence" value="ECO:0007669"/>
    <property type="project" value="InterPro"/>
</dbReference>
<dbReference type="GO" id="GO:0005524">
    <property type="term" value="F:ATP binding"/>
    <property type="evidence" value="ECO:0007669"/>
    <property type="project" value="UniProtKB-KW"/>
</dbReference>
<dbReference type="GO" id="GO:0016743">
    <property type="term" value="F:carboxyl- or carbamoyltransferase activity"/>
    <property type="evidence" value="ECO:0007669"/>
    <property type="project" value="UniProtKB-UniRule"/>
</dbReference>
<dbReference type="GO" id="GO:0008270">
    <property type="term" value="F:zinc ion binding"/>
    <property type="evidence" value="ECO:0007669"/>
    <property type="project" value="UniProtKB-UniRule"/>
</dbReference>
<dbReference type="GO" id="GO:0006633">
    <property type="term" value="P:fatty acid biosynthetic process"/>
    <property type="evidence" value="ECO:0007669"/>
    <property type="project" value="UniProtKB-KW"/>
</dbReference>
<dbReference type="GO" id="GO:2001295">
    <property type="term" value="P:malonyl-CoA biosynthetic process"/>
    <property type="evidence" value="ECO:0007669"/>
    <property type="project" value="UniProtKB-UniRule"/>
</dbReference>
<dbReference type="Gene3D" id="3.90.226.10">
    <property type="entry name" value="2-enoyl-CoA Hydratase, Chain A, domain 1"/>
    <property type="match status" value="1"/>
</dbReference>
<dbReference type="HAMAP" id="MF_01395">
    <property type="entry name" value="AcetylCoA_CT_beta"/>
    <property type="match status" value="1"/>
</dbReference>
<dbReference type="InterPro" id="IPR034733">
    <property type="entry name" value="AcCoA_carboxyl_beta"/>
</dbReference>
<dbReference type="InterPro" id="IPR000438">
    <property type="entry name" value="Acetyl_CoA_COase_Trfase_b_su"/>
</dbReference>
<dbReference type="InterPro" id="IPR029045">
    <property type="entry name" value="ClpP/crotonase-like_dom_sf"/>
</dbReference>
<dbReference type="InterPro" id="IPR011762">
    <property type="entry name" value="COA_CT_N"/>
</dbReference>
<dbReference type="InterPro" id="IPR041010">
    <property type="entry name" value="Znf-ACC"/>
</dbReference>
<dbReference type="NCBIfam" id="TIGR00515">
    <property type="entry name" value="accD"/>
    <property type="match status" value="1"/>
</dbReference>
<dbReference type="PANTHER" id="PTHR42995">
    <property type="entry name" value="ACETYL-COENZYME A CARBOXYLASE CARBOXYL TRANSFERASE SUBUNIT BETA, CHLOROPLASTIC"/>
    <property type="match status" value="1"/>
</dbReference>
<dbReference type="PANTHER" id="PTHR42995:SF5">
    <property type="entry name" value="ACETYL-COENZYME A CARBOXYLASE CARBOXYL TRANSFERASE SUBUNIT BETA, CHLOROPLASTIC"/>
    <property type="match status" value="1"/>
</dbReference>
<dbReference type="Pfam" id="PF01039">
    <property type="entry name" value="Carboxyl_trans"/>
    <property type="match status" value="1"/>
</dbReference>
<dbReference type="Pfam" id="PF17848">
    <property type="entry name" value="Zn_ribbon_ACC"/>
    <property type="match status" value="1"/>
</dbReference>
<dbReference type="PRINTS" id="PR01070">
    <property type="entry name" value="ACCCTRFRASEB"/>
</dbReference>
<dbReference type="SUPFAM" id="SSF52096">
    <property type="entry name" value="ClpP/crotonase"/>
    <property type="match status" value="1"/>
</dbReference>
<dbReference type="PROSITE" id="PS50980">
    <property type="entry name" value="COA_CT_NTER"/>
    <property type="match status" value="1"/>
</dbReference>
<feature type="chain" id="PRO_0000389850" description="Acetyl-coenzyme A carboxylase carboxyl transferase subunit beta">
    <location>
        <begin position="1"/>
        <end position="285"/>
    </location>
</feature>
<feature type="domain" description="CoA carboxyltransferase N-terminal" evidence="2">
    <location>
        <begin position="29"/>
        <end position="285"/>
    </location>
</feature>
<feature type="zinc finger region" description="C4-type" evidence="1">
    <location>
        <begin position="33"/>
        <end position="55"/>
    </location>
</feature>
<feature type="binding site" evidence="1">
    <location>
        <position position="33"/>
    </location>
    <ligand>
        <name>Zn(2+)</name>
        <dbReference type="ChEBI" id="CHEBI:29105"/>
    </ligand>
</feature>
<feature type="binding site" evidence="1">
    <location>
        <position position="36"/>
    </location>
    <ligand>
        <name>Zn(2+)</name>
        <dbReference type="ChEBI" id="CHEBI:29105"/>
    </ligand>
</feature>
<feature type="binding site" evidence="1">
    <location>
        <position position="52"/>
    </location>
    <ligand>
        <name>Zn(2+)</name>
        <dbReference type="ChEBI" id="CHEBI:29105"/>
    </ligand>
</feature>
<feature type="binding site" evidence="1">
    <location>
        <position position="55"/>
    </location>
    <ligand>
        <name>Zn(2+)</name>
        <dbReference type="ChEBI" id="CHEBI:29105"/>
    </ligand>
</feature>
<gene>
    <name evidence="1" type="primary">accD</name>
    <name type="ordered locus">SaurJH9_1757</name>
</gene>
<evidence type="ECO:0000255" key="1">
    <source>
        <dbReference type="HAMAP-Rule" id="MF_01395"/>
    </source>
</evidence>
<evidence type="ECO:0000255" key="2">
    <source>
        <dbReference type="PROSITE-ProRule" id="PRU01136"/>
    </source>
</evidence>
<reference key="1">
    <citation type="submission" date="2007-05" db="EMBL/GenBank/DDBJ databases">
        <title>Complete sequence of chromosome of Staphylococcus aureus subsp. aureus JH9.</title>
        <authorList>
            <consortium name="US DOE Joint Genome Institute"/>
            <person name="Copeland A."/>
            <person name="Lucas S."/>
            <person name="Lapidus A."/>
            <person name="Barry K."/>
            <person name="Detter J.C."/>
            <person name="Glavina del Rio T."/>
            <person name="Hammon N."/>
            <person name="Israni S."/>
            <person name="Pitluck S."/>
            <person name="Chain P."/>
            <person name="Malfatti S."/>
            <person name="Shin M."/>
            <person name="Vergez L."/>
            <person name="Schmutz J."/>
            <person name="Larimer F."/>
            <person name="Land M."/>
            <person name="Hauser L."/>
            <person name="Kyrpides N."/>
            <person name="Kim E."/>
            <person name="Tomasz A."/>
            <person name="Richardson P."/>
        </authorList>
    </citation>
    <scope>NUCLEOTIDE SEQUENCE [LARGE SCALE GENOMIC DNA]</scope>
    <source>
        <strain>JH9</strain>
    </source>
</reference>
<organism>
    <name type="scientific">Staphylococcus aureus (strain JH9)</name>
    <dbReference type="NCBI Taxonomy" id="359786"/>
    <lineage>
        <taxon>Bacteria</taxon>
        <taxon>Bacillati</taxon>
        <taxon>Bacillota</taxon>
        <taxon>Bacilli</taxon>
        <taxon>Bacillales</taxon>
        <taxon>Staphylococcaceae</taxon>
        <taxon>Staphylococcus</taxon>
    </lineage>
</organism>